<dbReference type="EMBL" id="AY961628">
    <property type="protein sequence ID" value="AAY41144.1"/>
    <property type="molecule type" value="Genomic_DNA"/>
</dbReference>
<dbReference type="SMR" id="P0C704"/>
<dbReference type="IntAct" id="P0C704">
    <property type="interactions" value="3"/>
</dbReference>
<dbReference type="Proteomes" id="UP000007641">
    <property type="component" value="Genome"/>
</dbReference>
<dbReference type="GO" id="GO:0042025">
    <property type="term" value="C:host cell nucleus"/>
    <property type="evidence" value="ECO:0007669"/>
    <property type="project" value="UniProtKB-SubCell"/>
</dbReference>
<dbReference type="GO" id="GO:0039622">
    <property type="term" value="C:T=16 icosahedral viral capsid"/>
    <property type="evidence" value="ECO:0007669"/>
    <property type="project" value="UniProtKB-KW"/>
</dbReference>
<dbReference type="GO" id="GO:0005198">
    <property type="term" value="F:structural molecule activity"/>
    <property type="evidence" value="ECO:0007669"/>
    <property type="project" value="InterPro"/>
</dbReference>
<dbReference type="HAMAP" id="MF_04016">
    <property type="entry name" value="HSV_MCP"/>
    <property type="match status" value="1"/>
</dbReference>
<dbReference type="InterPro" id="IPR000912">
    <property type="entry name" value="Herpes_MCP"/>
</dbReference>
<dbReference type="InterPro" id="IPR023233">
    <property type="entry name" value="Herpes_MCP_upper_sf"/>
</dbReference>
<dbReference type="Pfam" id="PF03122">
    <property type="entry name" value="Herpes_MCP"/>
    <property type="match status" value="1"/>
</dbReference>
<dbReference type="PRINTS" id="PR00235">
    <property type="entry name" value="HSVCAPSIDMCP"/>
</dbReference>
<dbReference type="SUPFAM" id="SSF103417">
    <property type="entry name" value="Major capsid protein VP5"/>
    <property type="match status" value="1"/>
</dbReference>
<reference key="1">
    <citation type="journal article" date="2005" name="J. Virol.">
        <title>Genomic sequence analysis of Epstein-Barr virus strain GD1 from a nasopharyngeal carcinoma patient.</title>
        <authorList>
            <person name="Zeng M.-S."/>
            <person name="Li D.-J."/>
            <person name="Liu Q.-L."/>
            <person name="Song L.-B."/>
            <person name="Li M.-Z."/>
            <person name="Zhang R.-H."/>
            <person name="Yu X.-J."/>
            <person name="Wang H.-M."/>
            <person name="Ernberg I."/>
            <person name="Zeng Y.-X."/>
        </authorList>
    </citation>
    <scope>NUCLEOTIDE SEQUENCE [LARGE SCALE GENOMIC DNA]</scope>
</reference>
<organismHost>
    <name type="scientific">Homo sapiens</name>
    <name type="common">Human</name>
    <dbReference type="NCBI Taxonomy" id="9606"/>
</organismHost>
<keyword id="KW-0167">Capsid protein</keyword>
<keyword id="KW-1048">Host nucleus</keyword>
<keyword id="KW-1147">T=16 icosahedral capsid protein</keyword>
<keyword id="KW-0946">Virion</keyword>
<comment type="function">
    <text evidence="1">Self-assembles to form an icosahedral capsid with a T=16 symmetry, about 200 nm in diameter, and consisting of 150 hexons and 12 pentons (total of 162 capsomers). Hexons form the edges and faces of the capsid and are each composed of six MCP molecules. In contrast, one penton is found at each of the 12 vertices. Eleven of the pentons are MCP pentamers, while the last vertex is occupied by the portal complex. The capsid is surrounded by a layer of proteinaceous material designated the tegument which, in turn, is enclosed in an envelope of host cell-derived lipids containing virus-encoded glycoproteins.</text>
</comment>
<comment type="subunit">
    <text evidence="1">Homomultimer. Makes the hexons and eleven out of twelve pentons. Interacts with triplex proteins 1/TRX1 and 2/TRX2; adjacent capsomers are linked together in groups of three by triplexes, heterotrimeric complexes composed of one molecule of TRX1 and two molecules of TRX2. Interacts with scaffold protein; this interaction allows efficient MCP transport to the host nucleus. Interacts with capsid vertex component 2/CVC2. Interacts with the small capsomere-interacting protein/SCP.</text>
</comment>
<comment type="subcellular location">
    <subcellularLocation>
        <location evidence="1">Virion</location>
    </subcellularLocation>
    <subcellularLocation>
        <location evidence="1">Host nucleus</location>
    </subcellularLocation>
</comment>
<comment type="similarity">
    <text evidence="1">Belongs to the herpesviridae major capsid protein family.</text>
</comment>
<feature type="chain" id="PRO_0000375972" description="Major capsid protein">
    <location>
        <begin position="1"/>
        <end position="1381"/>
    </location>
</feature>
<accession>P0C704</accession>
<accession>Q3KSQ5</accession>
<sequence length="1381" mass="153931">MASNEGVENRPFPYLTVDADLLSNLRQSAAEGLFHSFDLLVGKDAREAGIKFEVLLGVYTNAIQYVRFLETALAVSCVNTEFKDLSRMTDGKIQFRISVPTIAHGDGRRPSKQRTFIVVKNCHKHHISTEMELSMLDLEILHSIPETPVEYAEYVGAVKTVASALQFGVDALERGLINTVLSVKLRHAPPMFILQTLADPTFTERGFSKTVKSDLIAMFKRHLLEHSFFLDRAENMGSGFSQYVRSRLSEMVAAVSGESVLKGVSTYTTAKGGEPVGGVFIVTDNVLRQLLTFLGEEADNQIMGPSSYASFVVRGENLVTAVSYGRVMRTFEHFMARIVDSPEKAGSTKSDLPAVAAGVEDQPRVPISAAVIKLGNHAVAVESLQKMYNDTQSPYPLNRRMQYSYYFPVGLFMPNPKYTTSAAIKMLDNPTQQLPVEAWIVNKNNLLLAFNLQNALKVLCHPRLHTPAHTLNSLNAAPAPRDRRETYSLQHRRPNHMNVLVIVDEFYDNKYAAPVTDIALKCGLPTEDFLHPSNYDLLRLELHPLYDIYIGRDAGERARHRAVHRLMVGNLPTPLAPAAFQEARGQQFETATSLAHVVDQAVIETVQDTAYDTAYPAFFYVVEAMIHGFEEKFVMNVPLVSLCINTYWERAGRLAFVNSFSMIKFICRHLGNNAISKEAYSMYRKIYGELIALEQALMRLAGSDVVGDESVGQYVCALLDPNLLPPVAYTDIFTHLLTVSDRAPQIIIGNEVYADTLAAPQFIERVGNMDEMAAQFVALYGYRVNGDHDHDFRLHLGPYVDEGHADVLEKIFYYVFLPTCTNAHMCGLGVDFQHVAQTLAYNGPAFSHHFTRDEDILDNLENGTLRDLLEISDLRPTVGMIRDLSASFMTCPTFTRTVRVSVDNDVTQQLAPNPADKRTEQTVLVNGLVAFAFSERTRAVTQCLFHAIPFHMFYGDPRVAATMHQDVATFVMRNPQQRAVEAFNRPEQLFAEYREWHRSPMGKYAAECLPSLVSISGMTAMHIKMSPMAYIAQAKLKIHPGVAMTVVRTDEILSENILFSSRASTSMFIGTPNVSRREARVDAVTFEVHHEMASIDTGLSYSSTMTPARVAAITTDMGIHTQDFFSVFPAEAFGNQQVNDYIKAKVGAQRNGTLLRDPRTYLAGMTNVNGAPGLCHGQQATCEIIVTPVTADVAYFQKSNSPRGRAACVVSCENYNQEVAEGLIYDHSRPDAAYEYRSTVNPWASQLGSLGDIMYNSSYRQTAVPGLYSPCRAFFNKEELLRNNRGLYNMVNEYSQRLGGHPATSNTEVQFVVIAGTDVFLEQPCSFLQEAFPALSASSRALIDEFMSVKQTHAPIHYGHYIIEEVAPVRRILKFGNKVVF</sequence>
<evidence type="ECO:0000255" key="1">
    <source>
        <dbReference type="HAMAP-Rule" id="MF_04016"/>
    </source>
</evidence>
<organism>
    <name type="scientific">Epstein-Barr virus (strain GD1)</name>
    <name type="common">HHV-4</name>
    <name type="synonym">Human gammaherpesvirus 4</name>
    <dbReference type="NCBI Taxonomy" id="10376"/>
    <lineage>
        <taxon>Viruses</taxon>
        <taxon>Duplodnaviria</taxon>
        <taxon>Heunggongvirae</taxon>
        <taxon>Peploviricota</taxon>
        <taxon>Herviviricetes</taxon>
        <taxon>Herpesvirales</taxon>
        <taxon>Orthoherpesviridae</taxon>
        <taxon>Gammaherpesvirinae</taxon>
        <taxon>Lymphocryptovirus</taxon>
        <taxon>Lymphocryptovirus humangamma4</taxon>
    </lineage>
</organism>
<gene>
    <name evidence="1" type="primary">MCP</name>
    <name type="ORF">BcLF1</name>
</gene>
<proteinExistence type="inferred from homology"/>
<protein>
    <recommendedName>
        <fullName evidence="1">Major capsid protein</fullName>
        <shortName evidence="1">MCP</shortName>
    </recommendedName>
</protein>
<name>MCP_EBVG</name>